<comment type="miscellaneous">
    <text evidence="1">Partially overlaps RRP14.</text>
</comment>
<comment type="caution">
    <text evidence="2">Product of a dubious gene prediction unlikely to encode a functional protein. Because of that it is not part of the S.cerevisiae S288c complete/reference proteome set.</text>
</comment>
<feature type="chain" id="PRO_0000203166" description="Putative uncharacterized protein YKL083W">
    <location>
        <begin position="1"/>
        <end position="204"/>
    </location>
</feature>
<proteinExistence type="uncertain"/>
<sequence length="204" mass="23674">MRWYIYRYIYIYMYLYIYVHTYIYIYYCCYYYRDYYLGPPFFLPVFNLPSNPALFFGTALPTYFLFIFSCLFLFLPLLSFLILRFSSLLFCLSDIVSSTTLLRSLHSIADFLFCASFLFIALRSSFSSSLILIPSACNIAFCHFSFSFCLICSSSSFASILFFLASNNFKCDFTSFLAGPFVLPAFLNLCKSEVALAPSSNMIF</sequence>
<protein>
    <recommendedName>
        <fullName>Putative uncharacterized protein YKL083W</fullName>
    </recommendedName>
</protein>
<reference key="1">
    <citation type="journal article" date="1994" name="Nature">
        <title>Complete DNA sequence of yeast chromosome XI.</title>
        <authorList>
            <person name="Dujon B."/>
            <person name="Alexandraki D."/>
            <person name="Andre B."/>
            <person name="Ansorge W."/>
            <person name="Baladron V."/>
            <person name="Ballesta J.P.G."/>
            <person name="Banrevi A."/>
            <person name="Bolle P.-A."/>
            <person name="Bolotin-Fukuhara M."/>
            <person name="Bossier P."/>
            <person name="Bou G."/>
            <person name="Boyer J."/>
            <person name="Buitrago M.J."/>
            <person name="Cheret G."/>
            <person name="Colleaux L."/>
            <person name="Daignan-Fornier B."/>
            <person name="del Rey F."/>
            <person name="Dion C."/>
            <person name="Domdey H."/>
            <person name="Duesterhoeft A."/>
            <person name="Duesterhus S."/>
            <person name="Entian K.-D."/>
            <person name="Erfle H."/>
            <person name="Esteban P.F."/>
            <person name="Feldmann H."/>
            <person name="Fernandes L."/>
            <person name="Fobo G.M."/>
            <person name="Fritz C."/>
            <person name="Fukuhara H."/>
            <person name="Gabel C."/>
            <person name="Gaillon L."/>
            <person name="Garcia-Cantalejo J.M."/>
            <person name="Garcia-Ramirez J.J."/>
            <person name="Gent M.E."/>
            <person name="Ghazvini M."/>
            <person name="Goffeau A."/>
            <person name="Gonzalez A."/>
            <person name="Grothues D."/>
            <person name="Guerreiro P."/>
            <person name="Hegemann J.H."/>
            <person name="Hewitt N."/>
            <person name="Hilger F."/>
            <person name="Hollenberg C.P."/>
            <person name="Horaitis O."/>
            <person name="Indge K.J."/>
            <person name="Jacquier A."/>
            <person name="James C.M."/>
            <person name="Jauniaux J.-C."/>
            <person name="Jimenez A."/>
            <person name="Keuchel H."/>
            <person name="Kirchrath L."/>
            <person name="Kleine K."/>
            <person name="Koetter P."/>
            <person name="Legrain P."/>
            <person name="Liebl S."/>
            <person name="Louis E.J."/>
            <person name="Maia e Silva A."/>
            <person name="Marck C."/>
            <person name="Monnier A.-L."/>
            <person name="Moestl D."/>
            <person name="Mueller S."/>
            <person name="Obermaier B."/>
            <person name="Oliver S.G."/>
            <person name="Pallier C."/>
            <person name="Pascolo S."/>
            <person name="Pfeiffer F."/>
            <person name="Philippsen P."/>
            <person name="Planta R.J."/>
            <person name="Pohl F.M."/>
            <person name="Pohl T.M."/>
            <person name="Poehlmann R."/>
            <person name="Portetelle D."/>
            <person name="Purnelle B."/>
            <person name="Puzos V."/>
            <person name="Ramezani Rad M."/>
            <person name="Rasmussen S.W."/>
            <person name="Remacha M.A."/>
            <person name="Revuelta J.L."/>
            <person name="Richard G.-F."/>
            <person name="Rieger M."/>
            <person name="Rodrigues-Pousada C."/>
            <person name="Rose M."/>
            <person name="Rupp T."/>
            <person name="Santos M.A."/>
            <person name="Schwager C."/>
            <person name="Sensen C."/>
            <person name="Skala J."/>
            <person name="Soares H."/>
            <person name="Sor F."/>
            <person name="Stegemann J."/>
            <person name="Tettelin H."/>
            <person name="Thierry A."/>
            <person name="Tzermia M."/>
            <person name="Urrestarazu L.A."/>
            <person name="van Dyck L."/>
            <person name="van Vliet-Reedijk J.C."/>
            <person name="Valens M."/>
            <person name="Vandenbol M."/>
            <person name="Vilela C."/>
            <person name="Vissers S."/>
            <person name="von Wettstein D."/>
            <person name="Voss H."/>
            <person name="Wiemann S."/>
            <person name="Xu G."/>
            <person name="Zimmermann J."/>
            <person name="Haasemann M."/>
            <person name="Becker I."/>
            <person name="Mewes H.-W."/>
        </authorList>
    </citation>
    <scope>NUCLEOTIDE SEQUENCE [LARGE SCALE GENOMIC DNA]</scope>
    <source>
        <strain>ATCC 204508 / S288c</strain>
    </source>
</reference>
<reference key="2">
    <citation type="journal article" date="2014" name="G3 (Bethesda)">
        <title>The reference genome sequence of Saccharomyces cerevisiae: Then and now.</title>
        <authorList>
            <person name="Engel S.R."/>
            <person name="Dietrich F.S."/>
            <person name="Fisk D.G."/>
            <person name="Binkley G."/>
            <person name="Balakrishnan R."/>
            <person name="Costanzo M.C."/>
            <person name="Dwight S.S."/>
            <person name="Hitz B.C."/>
            <person name="Karra K."/>
            <person name="Nash R.S."/>
            <person name="Weng S."/>
            <person name="Wong E.D."/>
            <person name="Lloyd P."/>
            <person name="Skrzypek M.S."/>
            <person name="Miyasato S.R."/>
            <person name="Simison M."/>
            <person name="Cherry J.M."/>
        </authorList>
    </citation>
    <scope>GENOME REANNOTATION</scope>
    <source>
        <strain>ATCC 204508 / S288c</strain>
    </source>
</reference>
<organism>
    <name type="scientific">Saccharomyces cerevisiae (strain ATCC 204508 / S288c)</name>
    <name type="common">Baker's yeast</name>
    <dbReference type="NCBI Taxonomy" id="559292"/>
    <lineage>
        <taxon>Eukaryota</taxon>
        <taxon>Fungi</taxon>
        <taxon>Dikarya</taxon>
        <taxon>Ascomycota</taxon>
        <taxon>Saccharomycotina</taxon>
        <taxon>Saccharomycetes</taxon>
        <taxon>Saccharomycetales</taxon>
        <taxon>Saccharomycetaceae</taxon>
        <taxon>Saccharomyces</taxon>
    </lineage>
</organism>
<name>YKI3_YEAST</name>
<evidence type="ECO:0000305" key="1"/>
<evidence type="ECO:0000305" key="2">
    <source>
    </source>
</evidence>
<dbReference type="EMBL" id="Z28082">
    <property type="protein sequence ID" value="CAA81920.1"/>
    <property type="molecule type" value="Genomic_DNA"/>
</dbReference>
<dbReference type="PIR" id="S37908">
    <property type="entry name" value="S37908"/>
</dbReference>
<dbReference type="STRING" id="4932.YKL083W"/>
<dbReference type="PaxDb" id="4932-YKL083W"/>
<dbReference type="EnsemblFungi" id="YKL083W_mRNA">
    <property type="protein sequence ID" value="YKL083W"/>
    <property type="gene ID" value="YKL083W"/>
</dbReference>
<dbReference type="AGR" id="SGD:S000001566"/>
<dbReference type="SGD" id="S000001566">
    <property type="gene designation" value="YKL083W"/>
</dbReference>
<dbReference type="eggNOG" id="ENOG502SX4W">
    <property type="taxonomic scope" value="Eukaryota"/>
</dbReference>
<dbReference type="HOGENOM" id="CLU_1344181_0_0_1"/>
<gene>
    <name type="ordered locus">YKL083W</name>
</gene>
<accession>P36079</accession>